<keyword id="KW-0963">Cytoplasm</keyword>
<feature type="chain" id="PRO_1000046936" description="PF03932 family protein CutC">
    <location>
        <begin position="1"/>
        <end position="248"/>
    </location>
</feature>
<protein>
    <recommendedName>
        <fullName evidence="1">PF03932 family protein CutC</fullName>
    </recommendedName>
</protein>
<reference key="1">
    <citation type="journal article" date="2006" name="Mol. Microbiol.">
        <title>Role of pathogenicity island-associated integrases in the genome plasticity of uropathogenic Escherichia coli strain 536.</title>
        <authorList>
            <person name="Hochhut B."/>
            <person name="Wilde C."/>
            <person name="Balling G."/>
            <person name="Middendorf B."/>
            <person name="Dobrindt U."/>
            <person name="Brzuszkiewicz E."/>
            <person name="Gottschalk G."/>
            <person name="Carniel E."/>
            <person name="Hacker J."/>
        </authorList>
    </citation>
    <scope>NUCLEOTIDE SEQUENCE [LARGE SCALE GENOMIC DNA]</scope>
    <source>
        <strain>536 / UPEC</strain>
    </source>
</reference>
<name>CUTC_ECOL5</name>
<gene>
    <name evidence="1" type="primary">cutC</name>
    <name type="ordered locus">ECP_1819</name>
</gene>
<accession>Q0TGV9</accession>
<organism>
    <name type="scientific">Escherichia coli O6:K15:H31 (strain 536 / UPEC)</name>
    <dbReference type="NCBI Taxonomy" id="362663"/>
    <lineage>
        <taxon>Bacteria</taxon>
        <taxon>Pseudomonadati</taxon>
        <taxon>Pseudomonadota</taxon>
        <taxon>Gammaproteobacteria</taxon>
        <taxon>Enterobacterales</taxon>
        <taxon>Enterobacteriaceae</taxon>
        <taxon>Escherichia</taxon>
    </lineage>
</organism>
<dbReference type="EMBL" id="CP000247">
    <property type="protein sequence ID" value="ABG69820.1"/>
    <property type="molecule type" value="Genomic_DNA"/>
</dbReference>
<dbReference type="RefSeq" id="WP_001185734.1">
    <property type="nucleotide sequence ID" value="NC_008253.1"/>
</dbReference>
<dbReference type="SMR" id="Q0TGV9"/>
<dbReference type="KEGG" id="ecp:ECP_1819"/>
<dbReference type="HOGENOM" id="CLU_050555_3_1_6"/>
<dbReference type="Proteomes" id="UP000009182">
    <property type="component" value="Chromosome"/>
</dbReference>
<dbReference type="GO" id="GO:0005737">
    <property type="term" value="C:cytoplasm"/>
    <property type="evidence" value="ECO:0007669"/>
    <property type="project" value="UniProtKB-SubCell"/>
</dbReference>
<dbReference type="GO" id="GO:0005507">
    <property type="term" value="F:copper ion binding"/>
    <property type="evidence" value="ECO:0007669"/>
    <property type="project" value="TreeGrafter"/>
</dbReference>
<dbReference type="FunFam" id="3.20.20.380:FF:000001">
    <property type="entry name" value="Copper homeostasis protein CutC"/>
    <property type="match status" value="1"/>
</dbReference>
<dbReference type="Gene3D" id="3.20.20.380">
    <property type="entry name" value="Copper homeostasis (CutC) domain"/>
    <property type="match status" value="1"/>
</dbReference>
<dbReference type="HAMAP" id="MF_00795">
    <property type="entry name" value="CutC"/>
    <property type="match status" value="1"/>
</dbReference>
<dbReference type="InterPro" id="IPR005627">
    <property type="entry name" value="CutC-like"/>
</dbReference>
<dbReference type="InterPro" id="IPR036822">
    <property type="entry name" value="CutC-like_dom_sf"/>
</dbReference>
<dbReference type="NCBIfam" id="NF008603">
    <property type="entry name" value="PRK11572.1"/>
    <property type="match status" value="1"/>
</dbReference>
<dbReference type="PANTHER" id="PTHR12598">
    <property type="entry name" value="COPPER HOMEOSTASIS PROTEIN CUTC"/>
    <property type="match status" value="1"/>
</dbReference>
<dbReference type="PANTHER" id="PTHR12598:SF0">
    <property type="entry name" value="COPPER HOMEOSTASIS PROTEIN CUTC HOMOLOG"/>
    <property type="match status" value="1"/>
</dbReference>
<dbReference type="Pfam" id="PF03932">
    <property type="entry name" value="CutC"/>
    <property type="match status" value="1"/>
</dbReference>
<dbReference type="SUPFAM" id="SSF110395">
    <property type="entry name" value="CutC-like"/>
    <property type="match status" value="1"/>
</dbReference>
<comment type="subunit">
    <text evidence="1">Homodimer.</text>
</comment>
<comment type="subcellular location">
    <subcellularLocation>
        <location evidence="1">Cytoplasm</location>
    </subcellularLocation>
</comment>
<comment type="similarity">
    <text evidence="1">Belongs to the CutC family.</text>
</comment>
<comment type="caution">
    <text evidence="1">Once thought to be involved in copper homeostasis, experiments in E.coli have shown this is not the case.</text>
</comment>
<evidence type="ECO:0000255" key="1">
    <source>
        <dbReference type="HAMAP-Rule" id="MF_00795"/>
    </source>
</evidence>
<proteinExistence type="inferred from homology"/>
<sequence>MALLEICCYSMECALTAQQNGADRVELCAAPKEGGLTPSLGVLKSVRQRVTIPVHPIIRPRGGDFCYSDGEFAAILEDVRTVRELGFPGLVTGVLDVDGNVDMPRMEKIMAAAGPLAVTFHRAFDMCANPLNTLNNLTELGIARVLTSGQKSDALQGLSKIMELIAHRDAPIIMAGAGVRAENLHHFLDAGVLEVHSSAGAWQASPMRYRNQGLSMSSDAHADEYSRYVVDGAAVAEMKGIIERHQAK</sequence>